<reference key="1">
    <citation type="submission" date="2007-05" db="EMBL/GenBank/DDBJ databases">
        <title>Complete sequence of chromosome of Acidiphilium cryptum JF-5.</title>
        <authorList>
            <consortium name="US DOE Joint Genome Institute"/>
            <person name="Copeland A."/>
            <person name="Lucas S."/>
            <person name="Lapidus A."/>
            <person name="Barry K."/>
            <person name="Detter J.C."/>
            <person name="Glavina del Rio T."/>
            <person name="Hammon N."/>
            <person name="Israni S."/>
            <person name="Dalin E."/>
            <person name="Tice H."/>
            <person name="Pitluck S."/>
            <person name="Sims D."/>
            <person name="Brettin T."/>
            <person name="Bruce D."/>
            <person name="Han C."/>
            <person name="Schmutz J."/>
            <person name="Larimer F."/>
            <person name="Land M."/>
            <person name="Hauser L."/>
            <person name="Kyrpides N."/>
            <person name="Kim E."/>
            <person name="Magnuson T."/>
            <person name="Richardson P."/>
        </authorList>
    </citation>
    <scope>NUCLEOTIDE SEQUENCE [LARGE SCALE GENOMIC DNA]</scope>
    <source>
        <strain>JF-5</strain>
    </source>
</reference>
<gene>
    <name evidence="1" type="primary">mnmA</name>
    <name type="ordered locus">Acry_1764</name>
</gene>
<name>MNMA_ACICJ</name>
<protein>
    <recommendedName>
        <fullName evidence="1">tRNA-specific 2-thiouridylase MnmA</fullName>
        <ecNumber evidence="1">2.8.1.13</ecNumber>
    </recommendedName>
</protein>
<proteinExistence type="inferred from homology"/>
<dbReference type="EC" id="2.8.1.13" evidence="1"/>
<dbReference type="EMBL" id="CP000697">
    <property type="protein sequence ID" value="ABQ30967.1"/>
    <property type="molecule type" value="Genomic_DNA"/>
</dbReference>
<dbReference type="RefSeq" id="WP_011942473.1">
    <property type="nucleotide sequence ID" value="NC_009484.1"/>
</dbReference>
<dbReference type="SMR" id="A5FZD5"/>
<dbReference type="STRING" id="349163.Acry_1764"/>
<dbReference type="KEGG" id="acr:Acry_1764"/>
<dbReference type="eggNOG" id="COG0482">
    <property type="taxonomic scope" value="Bacteria"/>
</dbReference>
<dbReference type="HOGENOM" id="CLU_035188_0_1_5"/>
<dbReference type="Proteomes" id="UP000000245">
    <property type="component" value="Chromosome"/>
</dbReference>
<dbReference type="GO" id="GO:0005737">
    <property type="term" value="C:cytoplasm"/>
    <property type="evidence" value="ECO:0007669"/>
    <property type="project" value="UniProtKB-SubCell"/>
</dbReference>
<dbReference type="GO" id="GO:0005524">
    <property type="term" value="F:ATP binding"/>
    <property type="evidence" value="ECO:0007669"/>
    <property type="project" value="UniProtKB-KW"/>
</dbReference>
<dbReference type="GO" id="GO:0000049">
    <property type="term" value="F:tRNA binding"/>
    <property type="evidence" value="ECO:0007669"/>
    <property type="project" value="UniProtKB-KW"/>
</dbReference>
<dbReference type="GO" id="GO:0103016">
    <property type="term" value="F:tRNA-uridine 2-sulfurtransferase activity"/>
    <property type="evidence" value="ECO:0007669"/>
    <property type="project" value="UniProtKB-EC"/>
</dbReference>
<dbReference type="GO" id="GO:0002143">
    <property type="term" value="P:tRNA wobble position uridine thiolation"/>
    <property type="evidence" value="ECO:0007669"/>
    <property type="project" value="TreeGrafter"/>
</dbReference>
<dbReference type="CDD" id="cd01998">
    <property type="entry name" value="MnmA_TRMU-like"/>
    <property type="match status" value="1"/>
</dbReference>
<dbReference type="Gene3D" id="2.30.30.280">
    <property type="entry name" value="Adenine nucleotide alpha hydrolases-like domains"/>
    <property type="match status" value="1"/>
</dbReference>
<dbReference type="Gene3D" id="3.40.50.620">
    <property type="entry name" value="HUPs"/>
    <property type="match status" value="1"/>
</dbReference>
<dbReference type="Gene3D" id="2.40.30.10">
    <property type="entry name" value="Translation factors"/>
    <property type="match status" value="1"/>
</dbReference>
<dbReference type="HAMAP" id="MF_00144">
    <property type="entry name" value="tRNA_thiouridyl_MnmA"/>
    <property type="match status" value="1"/>
</dbReference>
<dbReference type="InterPro" id="IPR004506">
    <property type="entry name" value="MnmA-like"/>
</dbReference>
<dbReference type="InterPro" id="IPR046885">
    <property type="entry name" value="MnmA-like_C"/>
</dbReference>
<dbReference type="InterPro" id="IPR046884">
    <property type="entry name" value="MnmA-like_central"/>
</dbReference>
<dbReference type="InterPro" id="IPR023382">
    <property type="entry name" value="MnmA-like_central_sf"/>
</dbReference>
<dbReference type="InterPro" id="IPR014729">
    <property type="entry name" value="Rossmann-like_a/b/a_fold"/>
</dbReference>
<dbReference type="NCBIfam" id="NF001138">
    <property type="entry name" value="PRK00143.1"/>
    <property type="match status" value="1"/>
</dbReference>
<dbReference type="NCBIfam" id="TIGR00420">
    <property type="entry name" value="trmU"/>
    <property type="match status" value="1"/>
</dbReference>
<dbReference type="PANTHER" id="PTHR11933:SF5">
    <property type="entry name" value="MITOCHONDRIAL TRNA-SPECIFIC 2-THIOURIDYLASE 1"/>
    <property type="match status" value="1"/>
</dbReference>
<dbReference type="PANTHER" id="PTHR11933">
    <property type="entry name" value="TRNA 5-METHYLAMINOMETHYL-2-THIOURIDYLATE -METHYLTRANSFERASE"/>
    <property type="match status" value="1"/>
</dbReference>
<dbReference type="Pfam" id="PF03054">
    <property type="entry name" value="tRNA_Me_trans"/>
    <property type="match status" value="1"/>
</dbReference>
<dbReference type="Pfam" id="PF20258">
    <property type="entry name" value="tRNA_Me_trans_C"/>
    <property type="match status" value="1"/>
</dbReference>
<dbReference type="Pfam" id="PF20259">
    <property type="entry name" value="tRNA_Me_trans_M"/>
    <property type="match status" value="1"/>
</dbReference>
<dbReference type="SUPFAM" id="SSF52402">
    <property type="entry name" value="Adenine nucleotide alpha hydrolases-like"/>
    <property type="match status" value="1"/>
</dbReference>
<feature type="chain" id="PRO_0000349496" description="tRNA-specific 2-thiouridylase MnmA">
    <location>
        <begin position="1"/>
        <end position="345"/>
    </location>
</feature>
<feature type="region of interest" description="Interaction with tRNA" evidence="1">
    <location>
        <begin position="146"/>
        <end position="148"/>
    </location>
</feature>
<feature type="active site" description="Nucleophile" evidence="1">
    <location>
        <position position="100"/>
    </location>
</feature>
<feature type="active site" description="Cysteine persulfide intermediate" evidence="1">
    <location>
        <position position="197"/>
    </location>
</feature>
<feature type="binding site" evidence="1">
    <location>
        <begin position="6"/>
        <end position="13"/>
    </location>
    <ligand>
        <name>ATP</name>
        <dbReference type="ChEBI" id="CHEBI:30616"/>
    </ligand>
</feature>
<feature type="binding site" evidence="1">
    <location>
        <position position="32"/>
    </location>
    <ligand>
        <name>ATP</name>
        <dbReference type="ChEBI" id="CHEBI:30616"/>
    </ligand>
</feature>
<feature type="binding site" evidence="1">
    <location>
        <position position="124"/>
    </location>
    <ligand>
        <name>ATP</name>
        <dbReference type="ChEBI" id="CHEBI:30616"/>
    </ligand>
</feature>
<feature type="site" description="Interaction with tRNA" evidence="1">
    <location>
        <position position="125"/>
    </location>
</feature>
<feature type="site" description="Interaction with tRNA" evidence="1">
    <location>
        <position position="328"/>
    </location>
</feature>
<feature type="disulfide bond" description="Alternate" evidence="1">
    <location>
        <begin position="100"/>
        <end position="197"/>
    </location>
</feature>
<evidence type="ECO:0000255" key="1">
    <source>
        <dbReference type="HAMAP-Rule" id="MF_00144"/>
    </source>
</evidence>
<sequence>MRVVVAMSGGVDSSVVAGLMHEAGHEVIGVTLQLYDHGAATGRKGACCAGQDIHDARNVADRLGIAHYVIDAEAAFRAAVIGDFAESYAEGRTPVPCVRCNQHLKFGDLLGLARDLGAEALATGHYVRREDGPEGAELHRAVDARRDQSWFLFATTRDQLAFSRFPLGTMPDKDAVRAEAARMNLPVAEKPDSQDICFVPSGTYADIVAKLRPDAAAPGEIVTEDGAVLDRHQGIARYTVGQAKRLGAASGHVVTRIDAARRRIVVGPRGAGGREVRIAEPNWLIDPPAAPFRASVKLRAGETPHPAEIDIARNLVTLDTPALAAPGQACVVYRESRVLGGGFIL</sequence>
<accession>A5FZD5</accession>
<organism>
    <name type="scientific">Acidiphilium cryptum (strain JF-5)</name>
    <dbReference type="NCBI Taxonomy" id="349163"/>
    <lineage>
        <taxon>Bacteria</taxon>
        <taxon>Pseudomonadati</taxon>
        <taxon>Pseudomonadota</taxon>
        <taxon>Alphaproteobacteria</taxon>
        <taxon>Acetobacterales</taxon>
        <taxon>Acidocellaceae</taxon>
        <taxon>Acidiphilium</taxon>
    </lineage>
</organism>
<keyword id="KW-0067">ATP-binding</keyword>
<keyword id="KW-0963">Cytoplasm</keyword>
<keyword id="KW-1015">Disulfide bond</keyword>
<keyword id="KW-0547">Nucleotide-binding</keyword>
<keyword id="KW-1185">Reference proteome</keyword>
<keyword id="KW-0694">RNA-binding</keyword>
<keyword id="KW-0808">Transferase</keyword>
<keyword id="KW-0819">tRNA processing</keyword>
<keyword id="KW-0820">tRNA-binding</keyword>
<comment type="function">
    <text evidence="1">Catalyzes the 2-thiolation of uridine at the wobble position (U34) of tRNA, leading to the formation of s(2)U34.</text>
</comment>
<comment type="catalytic activity">
    <reaction evidence="1">
        <text>S-sulfanyl-L-cysteinyl-[protein] + uridine(34) in tRNA + AH2 + ATP = 2-thiouridine(34) in tRNA + L-cysteinyl-[protein] + A + AMP + diphosphate + H(+)</text>
        <dbReference type="Rhea" id="RHEA:47032"/>
        <dbReference type="Rhea" id="RHEA-COMP:10131"/>
        <dbReference type="Rhea" id="RHEA-COMP:11726"/>
        <dbReference type="Rhea" id="RHEA-COMP:11727"/>
        <dbReference type="Rhea" id="RHEA-COMP:11728"/>
        <dbReference type="ChEBI" id="CHEBI:13193"/>
        <dbReference type="ChEBI" id="CHEBI:15378"/>
        <dbReference type="ChEBI" id="CHEBI:17499"/>
        <dbReference type="ChEBI" id="CHEBI:29950"/>
        <dbReference type="ChEBI" id="CHEBI:30616"/>
        <dbReference type="ChEBI" id="CHEBI:33019"/>
        <dbReference type="ChEBI" id="CHEBI:61963"/>
        <dbReference type="ChEBI" id="CHEBI:65315"/>
        <dbReference type="ChEBI" id="CHEBI:87170"/>
        <dbReference type="ChEBI" id="CHEBI:456215"/>
        <dbReference type="EC" id="2.8.1.13"/>
    </reaction>
</comment>
<comment type="subcellular location">
    <subcellularLocation>
        <location evidence="1">Cytoplasm</location>
    </subcellularLocation>
</comment>
<comment type="similarity">
    <text evidence="1">Belongs to the MnmA/TRMU family.</text>
</comment>